<name>GATC_NITOC</name>
<dbReference type="EC" id="6.3.5.-" evidence="1"/>
<dbReference type="EMBL" id="CP000127">
    <property type="protein sequence ID" value="ABA59088.1"/>
    <property type="molecule type" value="Genomic_DNA"/>
</dbReference>
<dbReference type="RefSeq" id="WP_002811864.1">
    <property type="nucleotide sequence ID" value="NC_007484.1"/>
</dbReference>
<dbReference type="SMR" id="Q3J7V8"/>
<dbReference type="STRING" id="323261.Noc_2635"/>
<dbReference type="KEGG" id="noc:Noc_2635"/>
<dbReference type="eggNOG" id="COG0721">
    <property type="taxonomic scope" value="Bacteria"/>
</dbReference>
<dbReference type="HOGENOM" id="CLU_105899_2_2_6"/>
<dbReference type="InParanoid" id="Q3J7V8"/>
<dbReference type="Proteomes" id="UP000006838">
    <property type="component" value="Chromosome"/>
</dbReference>
<dbReference type="GO" id="GO:0050566">
    <property type="term" value="F:asparaginyl-tRNA synthase (glutamine-hydrolyzing) activity"/>
    <property type="evidence" value="ECO:0007669"/>
    <property type="project" value="RHEA"/>
</dbReference>
<dbReference type="GO" id="GO:0005524">
    <property type="term" value="F:ATP binding"/>
    <property type="evidence" value="ECO:0007669"/>
    <property type="project" value="UniProtKB-KW"/>
</dbReference>
<dbReference type="GO" id="GO:0050567">
    <property type="term" value="F:glutaminyl-tRNA synthase (glutamine-hydrolyzing) activity"/>
    <property type="evidence" value="ECO:0007669"/>
    <property type="project" value="UniProtKB-UniRule"/>
</dbReference>
<dbReference type="GO" id="GO:0070681">
    <property type="term" value="P:glutaminyl-tRNAGln biosynthesis via transamidation"/>
    <property type="evidence" value="ECO:0007669"/>
    <property type="project" value="TreeGrafter"/>
</dbReference>
<dbReference type="GO" id="GO:0006450">
    <property type="term" value="P:regulation of translational fidelity"/>
    <property type="evidence" value="ECO:0007669"/>
    <property type="project" value="InterPro"/>
</dbReference>
<dbReference type="GO" id="GO:0006412">
    <property type="term" value="P:translation"/>
    <property type="evidence" value="ECO:0007669"/>
    <property type="project" value="UniProtKB-UniRule"/>
</dbReference>
<dbReference type="Gene3D" id="1.10.20.60">
    <property type="entry name" value="Glu-tRNAGln amidotransferase C subunit, N-terminal domain"/>
    <property type="match status" value="1"/>
</dbReference>
<dbReference type="HAMAP" id="MF_00122">
    <property type="entry name" value="GatC"/>
    <property type="match status" value="1"/>
</dbReference>
<dbReference type="InterPro" id="IPR036113">
    <property type="entry name" value="Asp/Glu-ADT_sf_sub_c"/>
</dbReference>
<dbReference type="InterPro" id="IPR003837">
    <property type="entry name" value="GatC"/>
</dbReference>
<dbReference type="NCBIfam" id="TIGR00135">
    <property type="entry name" value="gatC"/>
    <property type="match status" value="1"/>
</dbReference>
<dbReference type="PANTHER" id="PTHR15004">
    <property type="entry name" value="GLUTAMYL-TRNA(GLN) AMIDOTRANSFERASE SUBUNIT C, MITOCHONDRIAL"/>
    <property type="match status" value="1"/>
</dbReference>
<dbReference type="PANTHER" id="PTHR15004:SF0">
    <property type="entry name" value="GLUTAMYL-TRNA(GLN) AMIDOTRANSFERASE SUBUNIT C, MITOCHONDRIAL"/>
    <property type="match status" value="1"/>
</dbReference>
<dbReference type="Pfam" id="PF02686">
    <property type="entry name" value="GatC"/>
    <property type="match status" value="1"/>
</dbReference>
<dbReference type="SUPFAM" id="SSF141000">
    <property type="entry name" value="Glu-tRNAGln amidotransferase C subunit"/>
    <property type="match status" value="1"/>
</dbReference>
<feature type="chain" id="PRO_1000016159" description="Aspartyl/glutamyl-tRNA(Asn/Gln) amidotransferase subunit C">
    <location>
        <begin position="1"/>
        <end position="95"/>
    </location>
</feature>
<evidence type="ECO:0000255" key="1">
    <source>
        <dbReference type="HAMAP-Rule" id="MF_00122"/>
    </source>
</evidence>
<gene>
    <name evidence="1" type="primary">gatC</name>
    <name type="ordered locus">Noc_2635</name>
</gene>
<sequence>MTLKTADVEYIAHLARLAIDSEAIPHYKHDLSRILEFVGQMNKVDTTNIEPMAHPLDAIQRLRPDEVTESDQWRTFQSIAPQVEAGVYLIPKVID</sequence>
<organism>
    <name type="scientific">Nitrosococcus oceani (strain ATCC 19707 / BCRC 17464 / JCM 30415 / NCIMB 11848 / C-107)</name>
    <dbReference type="NCBI Taxonomy" id="323261"/>
    <lineage>
        <taxon>Bacteria</taxon>
        <taxon>Pseudomonadati</taxon>
        <taxon>Pseudomonadota</taxon>
        <taxon>Gammaproteobacteria</taxon>
        <taxon>Chromatiales</taxon>
        <taxon>Chromatiaceae</taxon>
        <taxon>Nitrosococcus</taxon>
    </lineage>
</organism>
<accession>Q3J7V8</accession>
<comment type="function">
    <text evidence="1">Allows the formation of correctly charged Asn-tRNA(Asn) or Gln-tRNA(Gln) through the transamidation of misacylated Asp-tRNA(Asn) or Glu-tRNA(Gln) in organisms which lack either or both of asparaginyl-tRNA or glutaminyl-tRNA synthetases. The reaction takes place in the presence of glutamine and ATP through an activated phospho-Asp-tRNA(Asn) or phospho-Glu-tRNA(Gln).</text>
</comment>
<comment type="catalytic activity">
    <reaction evidence="1">
        <text>L-glutamyl-tRNA(Gln) + L-glutamine + ATP + H2O = L-glutaminyl-tRNA(Gln) + L-glutamate + ADP + phosphate + H(+)</text>
        <dbReference type="Rhea" id="RHEA:17521"/>
        <dbReference type="Rhea" id="RHEA-COMP:9681"/>
        <dbReference type="Rhea" id="RHEA-COMP:9684"/>
        <dbReference type="ChEBI" id="CHEBI:15377"/>
        <dbReference type="ChEBI" id="CHEBI:15378"/>
        <dbReference type="ChEBI" id="CHEBI:29985"/>
        <dbReference type="ChEBI" id="CHEBI:30616"/>
        <dbReference type="ChEBI" id="CHEBI:43474"/>
        <dbReference type="ChEBI" id="CHEBI:58359"/>
        <dbReference type="ChEBI" id="CHEBI:78520"/>
        <dbReference type="ChEBI" id="CHEBI:78521"/>
        <dbReference type="ChEBI" id="CHEBI:456216"/>
    </reaction>
</comment>
<comment type="catalytic activity">
    <reaction evidence="1">
        <text>L-aspartyl-tRNA(Asn) + L-glutamine + ATP + H2O = L-asparaginyl-tRNA(Asn) + L-glutamate + ADP + phosphate + 2 H(+)</text>
        <dbReference type="Rhea" id="RHEA:14513"/>
        <dbReference type="Rhea" id="RHEA-COMP:9674"/>
        <dbReference type="Rhea" id="RHEA-COMP:9677"/>
        <dbReference type="ChEBI" id="CHEBI:15377"/>
        <dbReference type="ChEBI" id="CHEBI:15378"/>
        <dbReference type="ChEBI" id="CHEBI:29985"/>
        <dbReference type="ChEBI" id="CHEBI:30616"/>
        <dbReference type="ChEBI" id="CHEBI:43474"/>
        <dbReference type="ChEBI" id="CHEBI:58359"/>
        <dbReference type="ChEBI" id="CHEBI:78515"/>
        <dbReference type="ChEBI" id="CHEBI:78516"/>
        <dbReference type="ChEBI" id="CHEBI:456216"/>
    </reaction>
</comment>
<comment type="subunit">
    <text evidence="1">Heterotrimer of A, B and C subunits.</text>
</comment>
<comment type="similarity">
    <text evidence="1">Belongs to the GatC family.</text>
</comment>
<protein>
    <recommendedName>
        <fullName evidence="1">Aspartyl/glutamyl-tRNA(Asn/Gln) amidotransferase subunit C</fullName>
        <shortName evidence="1">Asp/Glu-ADT subunit C</shortName>
        <ecNumber evidence="1">6.3.5.-</ecNumber>
    </recommendedName>
</protein>
<proteinExistence type="inferred from homology"/>
<reference key="1">
    <citation type="journal article" date="2006" name="Appl. Environ. Microbiol.">
        <title>Complete genome sequence of the marine, chemolithoautotrophic, ammonia-oxidizing bacterium Nitrosococcus oceani ATCC 19707.</title>
        <authorList>
            <person name="Klotz M.G."/>
            <person name="Arp D.J."/>
            <person name="Chain P.S.G."/>
            <person name="El-Sheikh A.F."/>
            <person name="Hauser L.J."/>
            <person name="Hommes N.G."/>
            <person name="Larimer F.W."/>
            <person name="Malfatti S.A."/>
            <person name="Norton J.M."/>
            <person name="Poret-Peterson A.T."/>
            <person name="Vergez L.M."/>
            <person name="Ward B.B."/>
        </authorList>
    </citation>
    <scope>NUCLEOTIDE SEQUENCE [LARGE SCALE GENOMIC DNA]</scope>
    <source>
        <strain>ATCC 19707 / BCRC 17464 / JCM 30415 / NCIMB 11848 / C-107</strain>
    </source>
</reference>
<keyword id="KW-0067">ATP-binding</keyword>
<keyword id="KW-0436">Ligase</keyword>
<keyword id="KW-0547">Nucleotide-binding</keyword>
<keyword id="KW-0648">Protein biosynthesis</keyword>
<keyword id="KW-1185">Reference proteome</keyword>